<accession>Q93NE2</accession>
<protein>
    <recommendedName>
        <fullName evidence="1">tRNA pseudouridine synthase A</fullName>
        <ecNumber evidence="1">5.4.99.12</ecNumber>
    </recommendedName>
    <alternativeName>
        <fullName evidence="1">tRNA pseudouridine(38-40) synthase</fullName>
    </alternativeName>
    <alternativeName>
        <fullName evidence="1">tRNA pseudouridylate synthase I</fullName>
    </alternativeName>
    <alternativeName>
        <fullName evidence="1">tRNA-uridine isomerase I</fullName>
    </alternativeName>
</protein>
<gene>
    <name evidence="1" type="primary">truA</name>
</gene>
<reference key="1">
    <citation type="submission" date="2001-05" db="EMBL/GenBank/DDBJ databases">
        <title>Identification of serine/threonine kinase associate proteins in M. xanthus by yeast two-hybrid system.</title>
        <authorList>
            <person name="Nariya H."/>
            <person name="Inouye S."/>
        </authorList>
    </citation>
    <scope>NUCLEOTIDE SEQUENCE [GENOMIC DNA]</scope>
    <source>
        <strain>DZF1</strain>
    </source>
</reference>
<dbReference type="EC" id="5.4.99.12" evidence="1"/>
<dbReference type="EMBL" id="AF377337">
    <property type="protein sequence ID" value="AAK64428.1"/>
    <property type="molecule type" value="Genomic_DNA"/>
</dbReference>
<dbReference type="RefSeq" id="WP_011555089.1">
    <property type="nucleotide sequence ID" value="NZ_JABFNQ010000031.1"/>
</dbReference>
<dbReference type="SMR" id="Q93NE2"/>
<dbReference type="GeneID" id="41362399"/>
<dbReference type="OMA" id="ADAFCHN"/>
<dbReference type="GO" id="GO:0003723">
    <property type="term" value="F:RNA binding"/>
    <property type="evidence" value="ECO:0007669"/>
    <property type="project" value="InterPro"/>
</dbReference>
<dbReference type="GO" id="GO:0160147">
    <property type="term" value="F:tRNA pseudouridine(38-40) synthase activity"/>
    <property type="evidence" value="ECO:0007669"/>
    <property type="project" value="UniProtKB-EC"/>
</dbReference>
<dbReference type="GO" id="GO:0031119">
    <property type="term" value="P:tRNA pseudouridine synthesis"/>
    <property type="evidence" value="ECO:0007669"/>
    <property type="project" value="UniProtKB-UniRule"/>
</dbReference>
<dbReference type="CDD" id="cd02570">
    <property type="entry name" value="PseudoU_synth_EcTruA"/>
    <property type="match status" value="1"/>
</dbReference>
<dbReference type="FunFam" id="3.30.70.580:FF:000001">
    <property type="entry name" value="tRNA pseudouridine synthase A"/>
    <property type="match status" value="1"/>
</dbReference>
<dbReference type="Gene3D" id="3.30.70.660">
    <property type="entry name" value="Pseudouridine synthase I, catalytic domain, C-terminal subdomain"/>
    <property type="match status" value="1"/>
</dbReference>
<dbReference type="Gene3D" id="3.30.70.580">
    <property type="entry name" value="Pseudouridine synthase I, catalytic domain, N-terminal subdomain"/>
    <property type="match status" value="1"/>
</dbReference>
<dbReference type="HAMAP" id="MF_00171">
    <property type="entry name" value="TruA"/>
    <property type="match status" value="1"/>
</dbReference>
<dbReference type="InterPro" id="IPR020103">
    <property type="entry name" value="PsdUridine_synth_cat_dom_sf"/>
</dbReference>
<dbReference type="InterPro" id="IPR001406">
    <property type="entry name" value="PsdUridine_synth_TruA"/>
</dbReference>
<dbReference type="InterPro" id="IPR020097">
    <property type="entry name" value="PsdUridine_synth_TruA_a/b_dom"/>
</dbReference>
<dbReference type="InterPro" id="IPR020095">
    <property type="entry name" value="PsdUridine_synth_TruA_C"/>
</dbReference>
<dbReference type="InterPro" id="IPR020094">
    <property type="entry name" value="TruA/RsuA/RluB/E/F_N"/>
</dbReference>
<dbReference type="NCBIfam" id="TIGR00071">
    <property type="entry name" value="hisT_truA"/>
    <property type="match status" value="1"/>
</dbReference>
<dbReference type="PANTHER" id="PTHR11142">
    <property type="entry name" value="PSEUDOURIDYLATE SYNTHASE"/>
    <property type="match status" value="1"/>
</dbReference>
<dbReference type="PANTHER" id="PTHR11142:SF0">
    <property type="entry name" value="TRNA PSEUDOURIDINE SYNTHASE-LIKE 1"/>
    <property type="match status" value="1"/>
</dbReference>
<dbReference type="Pfam" id="PF01416">
    <property type="entry name" value="PseudoU_synth_1"/>
    <property type="match status" value="2"/>
</dbReference>
<dbReference type="PIRSF" id="PIRSF001430">
    <property type="entry name" value="tRNA_psdUrid_synth"/>
    <property type="match status" value="1"/>
</dbReference>
<dbReference type="SUPFAM" id="SSF55120">
    <property type="entry name" value="Pseudouridine synthase"/>
    <property type="match status" value="1"/>
</dbReference>
<sequence>MPRLKLTLEYEGTRYVGWQVQPNGPSIQSVLESGLERLLGARVSVASAGRTDAGVHASGQVACFDSPRVLPMKAYVMGLNGLLPPDVAVVDAVEVAEDFDPRRWSRGKRYRYRVSNRRTRSPLRRMTHWEVFAPLDVEAMRQAAAHLLGRHDFSAFRAADCQAKHAVREIRSLAVEGTSGDAVSFVVEGTAFLKHMVRNLAGTLVEVGKGRRPASWVAEVLASQERKRAGPTAPPQGLVLEEVFYRDGPPARTPGGTTDAEEDEG</sequence>
<comment type="function">
    <text evidence="1">Formation of pseudouridine at positions 38, 39 and 40 in the anticodon stem and loop of transfer RNAs.</text>
</comment>
<comment type="catalytic activity">
    <reaction evidence="1">
        <text>uridine(38/39/40) in tRNA = pseudouridine(38/39/40) in tRNA</text>
        <dbReference type="Rhea" id="RHEA:22376"/>
        <dbReference type="Rhea" id="RHEA-COMP:10085"/>
        <dbReference type="Rhea" id="RHEA-COMP:10087"/>
        <dbReference type="ChEBI" id="CHEBI:65314"/>
        <dbReference type="ChEBI" id="CHEBI:65315"/>
        <dbReference type="EC" id="5.4.99.12"/>
    </reaction>
</comment>
<comment type="subunit">
    <text evidence="1">Homodimer.</text>
</comment>
<comment type="similarity">
    <text evidence="1">Belongs to the tRNA pseudouridine synthase TruA family.</text>
</comment>
<keyword id="KW-0413">Isomerase</keyword>
<keyword id="KW-0819">tRNA processing</keyword>
<evidence type="ECO:0000255" key="1">
    <source>
        <dbReference type="HAMAP-Rule" id="MF_00171"/>
    </source>
</evidence>
<evidence type="ECO:0000256" key="2">
    <source>
        <dbReference type="SAM" id="MobiDB-lite"/>
    </source>
</evidence>
<name>TRUA_MYXXA</name>
<proteinExistence type="inferred from homology"/>
<feature type="chain" id="PRO_0000057417" description="tRNA pseudouridine synthase A">
    <location>
        <begin position="1"/>
        <end position="265"/>
    </location>
</feature>
<feature type="region of interest" description="Disordered" evidence="2">
    <location>
        <begin position="244"/>
        <end position="265"/>
    </location>
</feature>
<feature type="active site" description="Nucleophile" evidence="1">
    <location>
        <position position="52"/>
    </location>
</feature>
<feature type="binding site" evidence="1">
    <location>
        <position position="110"/>
    </location>
    <ligand>
        <name>substrate</name>
    </ligand>
</feature>
<organism>
    <name type="scientific">Myxococcus xanthus</name>
    <dbReference type="NCBI Taxonomy" id="34"/>
    <lineage>
        <taxon>Bacteria</taxon>
        <taxon>Pseudomonadati</taxon>
        <taxon>Myxococcota</taxon>
        <taxon>Myxococcia</taxon>
        <taxon>Myxococcales</taxon>
        <taxon>Cystobacterineae</taxon>
        <taxon>Myxococcaceae</taxon>
        <taxon>Myxococcus</taxon>
    </lineage>
</organism>